<proteinExistence type="uncertain"/>
<dbReference type="EMBL" id="X79489">
    <property type="protein sequence ID" value="CAA56008.1"/>
    <property type="molecule type" value="Genomic_DNA"/>
</dbReference>
<dbReference type="EMBL" id="Z35857">
    <property type="protein sequence ID" value="CAA84918.1"/>
    <property type="molecule type" value="Genomic_DNA"/>
</dbReference>
<dbReference type="PIR" id="S45408">
    <property type="entry name" value="S45408"/>
</dbReference>
<dbReference type="SMR" id="P38173"/>
<dbReference type="DIP" id="DIP-4504N"/>
<dbReference type="STRING" id="4932.YBL094C"/>
<dbReference type="PaxDb" id="4932-YBL094C"/>
<dbReference type="EnsemblFungi" id="YBL094C_mRNA">
    <property type="protein sequence ID" value="YBL094C"/>
    <property type="gene ID" value="YBL094C"/>
</dbReference>
<dbReference type="AGR" id="SGD:S000000190"/>
<dbReference type="SGD" id="S000000190">
    <property type="gene designation" value="YBL094C"/>
</dbReference>
<dbReference type="HOGENOM" id="CLU_2173012_0_0_1"/>
<dbReference type="GO" id="GO:0016020">
    <property type="term" value="C:membrane"/>
    <property type="evidence" value="ECO:0007669"/>
    <property type="project" value="UniProtKB-SubCell"/>
</dbReference>
<accession>P38173</accession>
<protein>
    <recommendedName>
        <fullName>Putative uncharacterized protein YBL094C</fullName>
    </recommendedName>
</protein>
<evidence type="ECO:0000255" key="1"/>
<evidence type="ECO:0000305" key="2"/>
<evidence type="ECO:0000305" key="3">
    <source>
    </source>
</evidence>
<comment type="subcellular location">
    <subcellularLocation>
        <location evidence="2">Membrane</location>
        <topology evidence="2">Multi-pass membrane protein</topology>
    </subcellularLocation>
</comment>
<comment type="miscellaneous">
    <text evidence="2">Almost completely overlaps YBL095W.</text>
</comment>
<comment type="caution">
    <text evidence="3">Product of a dubious gene prediction unlikely to encode a functional protein. Because of that it is not part of the S.cerevisiae S288c complete/reference proteome set.</text>
</comment>
<sequence length="110" mass="12079">MLFQNISSHLKYLNQVGSTRIQLALANFFAISCLWLKPQICGKFQLLVPFREETSNGNCSKCPSMIHFLPLISLTFAFSIIVVSTGMSSKNSSDSLAVTPLLLGNKGKPQ</sequence>
<name>YBJ4_YEAST</name>
<feature type="chain" id="PRO_0000202443" description="Putative uncharacterized protein YBL094C">
    <location>
        <begin position="1"/>
        <end position="110"/>
    </location>
</feature>
<feature type="transmembrane region" description="Helical" evidence="1">
    <location>
        <begin position="21"/>
        <end position="41"/>
    </location>
</feature>
<feature type="transmembrane region" description="Helical" evidence="1">
    <location>
        <begin position="63"/>
        <end position="83"/>
    </location>
</feature>
<keyword id="KW-0472">Membrane</keyword>
<keyword id="KW-0812">Transmembrane</keyword>
<keyword id="KW-1133">Transmembrane helix</keyword>
<organism>
    <name type="scientific">Saccharomyces cerevisiae (strain ATCC 204508 / S288c)</name>
    <name type="common">Baker's yeast</name>
    <dbReference type="NCBI Taxonomy" id="559292"/>
    <lineage>
        <taxon>Eukaryota</taxon>
        <taxon>Fungi</taxon>
        <taxon>Dikarya</taxon>
        <taxon>Ascomycota</taxon>
        <taxon>Saccharomycotina</taxon>
        <taxon>Saccharomycetes</taxon>
        <taxon>Saccharomycetales</taxon>
        <taxon>Saccharomycetaceae</taxon>
        <taxon>Saccharomyces</taxon>
    </lineage>
</organism>
<gene>
    <name type="ordered locus">YBL094C</name>
    <name type="ORF">YBL0836</name>
</gene>
<reference key="1">
    <citation type="journal article" date="1995" name="Yeast">
        <title>Sequence analysis of a 78.6 kb segment of the left end of Saccharomyces cerevisiae chromosome II.</title>
        <authorList>
            <person name="Obermaier B."/>
            <person name="Gassenhuber J."/>
            <person name="Piravandi E."/>
            <person name="Domdey H."/>
        </authorList>
    </citation>
    <scope>NUCLEOTIDE SEQUENCE [GENOMIC DNA]</scope>
    <source>
        <strain>ATCC 204508 / S288c</strain>
    </source>
</reference>
<reference key="2">
    <citation type="journal article" date="1994" name="EMBO J.">
        <title>Complete DNA sequence of yeast chromosome II.</title>
        <authorList>
            <person name="Feldmann H."/>
            <person name="Aigle M."/>
            <person name="Aljinovic G."/>
            <person name="Andre B."/>
            <person name="Baclet M.C."/>
            <person name="Barthe C."/>
            <person name="Baur A."/>
            <person name="Becam A.-M."/>
            <person name="Biteau N."/>
            <person name="Boles E."/>
            <person name="Brandt T."/>
            <person name="Brendel M."/>
            <person name="Brueckner M."/>
            <person name="Bussereau F."/>
            <person name="Christiansen C."/>
            <person name="Contreras R."/>
            <person name="Crouzet M."/>
            <person name="Cziepluch C."/>
            <person name="Demolis N."/>
            <person name="Delaveau T."/>
            <person name="Doignon F."/>
            <person name="Domdey H."/>
            <person name="Duesterhus S."/>
            <person name="Dubois E."/>
            <person name="Dujon B."/>
            <person name="El Bakkoury M."/>
            <person name="Entian K.-D."/>
            <person name="Feuermann M."/>
            <person name="Fiers W."/>
            <person name="Fobo G.M."/>
            <person name="Fritz C."/>
            <person name="Gassenhuber J."/>
            <person name="Glansdorff N."/>
            <person name="Goffeau A."/>
            <person name="Grivell L.A."/>
            <person name="de Haan M."/>
            <person name="Hein C."/>
            <person name="Herbert C.J."/>
            <person name="Hollenberg C.P."/>
            <person name="Holmstroem K."/>
            <person name="Jacq C."/>
            <person name="Jacquet M."/>
            <person name="Jauniaux J.-C."/>
            <person name="Jonniaux J.-L."/>
            <person name="Kallesoee T."/>
            <person name="Kiesau P."/>
            <person name="Kirchrath L."/>
            <person name="Koetter P."/>
            <person name="Korol S."/>
            <person name="Liebl S."/>
            <person name="Logghe M."/>
            <person name="Lohan A.J.E."/>
            <person name="Louis E.J."/>
            <person name="Li Z.Y."/>
            <person name="Maat M.J."/>
            <person name="Mallet L."/>
            <person name="Mannhaupt G."/>
            <person name="Messenguy F."/>
            <person name="Miosga T."/>
            <person name="Molemans F."/>
            <person name="Mueller S."/>
            <person name="Nasr F."/>
            <person name="Obermaier B."/>
            <person name="Perea J."/>
            <person name="Pierard A."/>
            <person name="Piravandi E."/>
            <person name="Pohl F.M."/>
            <person name="Pohl T.M."/>
            <person name="Potier S."/>
            <person name="Proft M."/>
            <person name="Purnelle B."/>
            <person name="Ramezani Rad M."/>
            <person name="Rieger M."/>
            <person name="Rose M."/>
            <person name="Schaaff-Gerstenschlaeger I."/>
            <person name="Scherens B."/>
            <person name="Schwarzlose C."/>
            <person name="Skala J."/>
            <person name="Slonimski P.P."/>
            <person name="Smits P.H.M."/>
            <person name="Souciet J.-L."/>
            <person name="Steensma H.Y."/>
            <person name="Stucka R."/>
            <person name="Urrestarazu L.A."/>
            <person name="van der Aart Q.J.M."/>
            <person name="Van Dyck L."/>
            <person name="Vassarotti A."/>
            <person name="Vetter I."/>
            <person name="Vierendeels F."/>
            <person name="Vissers S."/>
            <person name="Wagner G."/>
            <person name="de Wergifosse P."/>
            <person name="Wolfe K.H."/>
            <person name="Zagulski M."/>
            <person name="Zimmermann F.K."/>
            <person name="Mewes H.-W."/>
            <person name="Kleine K."/>
        </authorList>
    </citation>
    <scope>NUCLEOTIDE SEQUENCE [LARGE SCALE GENOMIC DNA]</scope>
    <source>
        <strain>ATCC 204508 / S288c</strain>
    </source>
</reference>
<reference key="3">
    <citation type="journal article" date="2014" name="G3 (Bethesda)">
        <title>The reference genome sequence of Saccharomyces cerevisiae: Then and now.</title>
        <authorList>
            <person name="Engel S.R."/>
            <person name="Dietrich F.S."/>
            <person name="Fisk D.G."/>
            <person name="Binkley G."/>
            <person name="Balakrishnan R."/>
            <person name="Costanzo M.C."/>
            <person name="Dwight S.S."/>
            <person name="Hitz B.C."/>
            <person name="Karra K."/>
            <person name="Nash R.S."/>
            <person name="Weng S."/>
            <person name="Wong E.D."/>
            <person name="Lloyd P."/>
            <person name="Skrzypek M.S."/>
            <person name="Miyasato S.R."/>
            <person name="Simison M."/>
            <person name="Cherry J.M."/>
        </authorList>
    </citation>
    <scope>GENOME REANNOTATION</scope>
    <source>
        <strain>ATCC 204508 / S288c</strain>
    </source>
</reference>